<feature type="chain" id="PRO_0000095632" description="RNA-binding protein Hfq">
    <location>
        <begin position="1"/>
        <end position="79"/>
    </location>
</feature>
<feature type="domain" description="Sm" evidence="2">
    <location>
        <begin position="10"/>
        <end position="69"/>
    </location>
</feature>
<dbReference type="EMBL" id="BX571965">
    <property type="protein sequence ID" value="CAH35519.1"/>
    <property type="molecule type" value="Genomic_DNA"/>
</dbReference>
<dbReference type="RefSeq" id="WP_004192796.1">
    <property type="nucleotide sequence ID" value="NZ_CP009538.1"/>
</dbReference>
<dbReference type="RefSeq" id="YP_108138.1">
    <property type="nucleotide sequence ID" value="NC_006350.1"/>
</dbReference>
<dbReference type="SMR" id="Q63US8"/>
<dbReference type="STRING" id="272560.BPSL1518"/>
<dbReference type="GeneID" id="93060471"/>
<dbReference type="KEGG" id="bps:BPSL1518"/>
<dbReference type="PATRIC" id="fig|272560.51.peg.3556"/>
<dbReference type="eggNOG" id="COG1923">
    <property type="taxonomic scope" value="Bacteria"/>
</dbReference>
<dbReference type="Proteomes" id="UP000000605">
    <property type="component" value="Chromosome 1"/>
</dbReference>
<dbReference type="GO" id="GO:0005829">
    <property type="term" value="C:cytosol"/>
    <property type="evidence" value="ECO:0007669"/>
    <property type="project" value="TreeGrafter"/>
</dbReference>
<dbReference type="GO" id="GO:0003723">
    <property type="term" value="F:RNA binding"/>
    <property type="evidence" value="ECO:0007669"/>
    <property type="project" value="UniProtKB-UniRule"/>
</dbReference>
<dbReference type="GO" id="GO:0006355">
    <property type="term" value="P:regulation of DNA-templated transcription"/>
    <property type="evidence" value="ECO:0007669"/>
    <property type="project" value="InterPro"/>
</dbReference>
<dbReference type="GO" id="GO:0043487">
    <property type="term" value="P:regulation of RNA stability"/>
    <property type="evidence" value="ECO:0007669"/>
    <property type="project" value="TreeGrafter"/>
</dbReference>
<dbReference type="GO" id="GO:0045974">
    <property type="term" value="P:regulation of translation, ncRNA-mediated"/>
    <property type="evidence" value="ECO:0007669"/>
    <property type="project" value="TreeGrafter"/>
</dbReference>
<dbReference type="CDD" id="cd01716">
    <property type="entry name" value="Hfq"/>
    <property type="match status" value="1"/>
</dbReference>
<dbReference type="FunFam" id="2.30.30.100:FF:000001">
    <property type="entry name" value="RNA-binding protein Hfq"/>
    <property type="match status" value="1"/>
</dbReference>
<dbReference type="Gene3D" id="2.30.30.100">
    <property type="match status" value="1"/>
</dbReference>
<dbReference type="HAMAP" id="MF_00436">
    <property type="entry name" value="Hfq"/>
    <property type="match status" value="1"/>
</dbReference>
<dbReference type="InterPro" id="IPR005001">
    <property type="entry name" value="Hfq"/>
</dbReference>
<dbReference type="InterPro" id="IPR010920">
    <property type="entry name" value="LSM_dom_sf"/>
</dbReference>
<dbReference type="InterPro" id="IPR047575">
    <property type="entry name" value="Sm"/>
</dbReference>
<dbReference type="NCBIfam" id="TIGR02383">
    <property type="entry name" value="Hfq"/>
    <property type="match status" value="1"/>
</dbReference>
<dbReference type="NCBIfam" id="NF001602">
    <property type="entry name" value="PRK00395.1"/>
    <property type="match status" value="1"/>
</dbReference>
<dbReference type="PANTHER" id="PTHR34772">
    <property type="entry name" value="RNA-BINDING PROTEIN HFQ"/>
    <property type="match status" value="1"/>
</dbReference>
<dbReference type="PANTHER" id="PTHR34772:SF1">
    <property type="entry name" value="RNA-BINDING PROTEIN HFQ"/>
    <property type="match status" value="1"/>
</dbReference>
<dbReference type="Pfam" id="PF17209">
    <property type="entry name" value="Hfq"/>
    <property type="match status" value="1"/>
</dbReference>
<dbReference type="SUPFAM" id="SSF50182">
    <property type="entry name" value="Sm-like ribonucleoproteins"/>
    <property type="match status" value="1"/>
</dbReference>
<dbReference type="PROSITE" id="PS52002">
    <property type="entry name" value="SM"/>
    <property type="match status" value="1"/>
</dbReference>
<organism>
    <name type="scientific">Burkholderia pseudomallei (strain K96243)</name>
    <dbReference type="NCBI Taxonomy" id="272560"/>
    <lineage>
        <taxon>Bacteria</taxon>
        <taxon>Pseudomonadati</taxon>
        <taxon>Pseudomonadota</taxon>
        <taxon>Betaproteobacteria</taxon>
        <taxon>Burkholderiales</taxon>
        <taxon>Burkholderiaceae</taxon>
        <taxon>Burkholderia</taxon>
        <taxon>pseudomallei group</taxon>
    </lineage>
</organism>
<reference key="1">
    <citation type="journal article" date="2004" name="Proc. Natl. Acad. Sci. U.S.A.">
        <title>Genomic plasticity of the causative agent of melioidosis, Burkholderia pseudomallei.</title>
        <authorList>
            <person name="Holden M.T.G."/>
            <person name="Titball R.W."/>
            <person name="Peacock S.J."/>
            <person name="Cerdeno-Tarraga A.-M."/>
            <person name="Atkins T."/>
            <person name="Crossman L.C."/>
            <person name="Pitt T."/>
            <person name="Churcher C."/>
            <person name="Mungall K.L."/>
            <person name="Bentley S.D."/>
            <person name="Sebaihia M."/>
            <person name="Thomson N.R."/>
            <person name="Bason N."/>
            <person name="Beacham I.R."/>
            <person name="Brooks K."/>
            <person name="Brown K.A."/>
            <person name="Brown N.F."/>
            <person name="Challis G.L."/>
            <person name="Cherevach I."/>
            <person name="Chillingworth T."/>
            <person name="Cronin A."/>
            <person name="Crossett B."/>
            <person name="Davis P."/>
            <person name="DeShazer D."/>
            <person name="Feltwell T."/>
            <person name="Fraser A."/>
            <person name="Hance Z."/>
            <person name="Hauser H."/>
            <person name="Holroyd S."/>
            <person name="Jagels K."/>
            <person name="Keith K.E."/>
            <person name="Maddison M."/>
            <person name="Moule S."/>
            <person name="Price C."/>
            <person name="Quail M.A."/>
            <person name="Rabbinowitsch E."/>
            <person name="Rutherford K."/>
            <person name="Sanders M."/>
            <person name="Simmonds M."/>
            <person name="Songsivilai S."/>
            <person name="Stevens K."/>
            <person name="Tumapa S."/>
            <person name="Vesaratchavest M."/>
            <person name="Whitehead S."/>
            <person name="Yeats C."/>
            <person name="Barrell B.G."/>
            <person name="Oyston P.C.F."/>
            <person name="Parkhill J."/>
        </authorList>
    </citation>
    <scope>NUCLEOTIDE SEQUENCE [LARGE SCALE GENOMIC DNA]</scope>
    <source>
        <strain>K96243</strain>
    </source>
</reference>
<gene>
    <name evidence="1" type="primary">hfq</name>
    <name type="ordered locus">BPSL1518</name>
</gene>
<keyword id="KW-1185">Reference proteome</keyword>
<keyword id="KW-0694">RNA-binding</keyword>
<keyword id="KW-0346">Stress response</keyword>
<name>HFQ_BURPS</name>
<comment type="function">
    <text evidence="1">RNA chaperone that binds small regulatory RNA (sRNAs) and mRNAs to facilitate mRNA translational regulation in response to envelope stress, environmental stress and changes in metabolite concentrations. Also binds with high specificity to tRNAs.</text>
</comment>
<comment type="subunit">
    <text evidence="1">Homohexamer.</text>
</comment>
<comment type="similarity">
    <text evidence="1">Belongs to the Hfq family.</text>
</comment>
<proteinExistence type="inferred from homology"/>
<protein>
    <recommendedName>
        <fullName evidence="1">RNA-binding protein Hfq</fullName>
    </recommendedName>
</protein>
<sequence>MSNKGQLLQDPFLNALRKEHVPVSIYLVNGIKLQGNIESFDQYVVLLRNTVTQMVYKHAISTVVPARPVNFHPDAEAAS</sequence>
<evidence type="ECO:0000255" key="1">
    <source>
        <dbReference type="HAMAP-Rule" id="MF_00436"/>
    </source>
</evidence>
<evidence type="ECO:0000255" key="2">
    <source>
        <dbReference type="PROSITE-ProRule" id="PRU01346"/>
    </source>
</evidence>
<accession>Q63US8</accession>